<proteinExistence type="inferred from homology"/>
<organism>
    <name type="scientific">Sinorhizobium fredii (strain NBRC 101917 / NGR234)</name>
    <dbReference type="NCBI Taxonomy" id="394"/>
    <lineage>
        <taxon>Bacteria</taxon>
        <taxon>Pseudomonadati</taxon>
        <taxon>Pseudomonadota</taxon>
        <taxon>Alphaproteobacteria</taxon>
        <taxon>Hyphomicrobiales</taxon>
        <taxon>Rhizobiaceae</taxon>
        <taxon>Sinorhizobium/Ensifer group</taxon>
        <taxon>Sinorhizobium</taxon>
    </lineage>
</organism>
<protein>
    <recommendedName>
        <fullName evidence="1">Large ribosomal subunit protein uL6</fullName>
    </recommendedName>
    <alternativeName>
        <fullName evidence="2">50S ribosomal protein L6</fullName>
    </alternativeName>
</protein>
<keyword id="KW-1185">Reference proteome</keyword>
<keyword id="KW-0687">Ribonucleoprotein</keyword>
<keyword id="KW-0689">Ribosomal protein</keyword>
<keyword id="KW-0694">RNA-binding</keyword>
<keyword id="KW-0699">rRNA-binding</keyword>
<evidence type="ECO:0000255" key="1">
    <source>
        <dbReference type="HAMAP-Rule" id="MF_01365"/>
    </source>
</evidence>
<evidence type="ECO:0000305" key="2"/>
<name>RL6_SINFN</name>
<dbReference type="EMBL" id="CP001389">
    <property type="protein sequence ID" value="ACP24988.1"/>
    <property type="molecule type" value="Genomic_DNA"/>
</dbReference>
<dbReference type="RefSeq" id="WP_012707766.1">
    <property type="nucleotide sequence ID" value="NC_012587.1"/>
</dbReference>
<dbReference type="RefSeq" id="YP_002825741.1">
    <property type="nucleotide sequence ID" value="NC_012587.1"/>
</dbReference>
<dbReference type="SMR" id="C3MAZ5"/>
<dbReference type="STRING" id="394.NGR_c12060"/>
<dbReference type="GeneID" id="48972696"/>
<dbReference type="KEGG" id="rhi:NGR_c12060"/>
<dbReference type="PATRIC" id="fig|394.7.peg.4022"/>
<dbReference type="eggNOG" id="COG0097">
    <property type="taxonomic scope" value="Bacteria"/>
</dbReference>
<dbReference type="HOGENOM" id="CLU_065464_1_2_5"/>
<dbReference type="OrthoDB" id="9805007at2"/>
<dbReference type="Proteomes" id="UP000001054">
    <property type="component" value="Chromosome"/>
</dbReference>
<dbReference type="GO" id="GO:0022625">
    <property type="term" value="C:cytosolic large ribosomal subunit"/>
    <property type="evidence" value="ECO:0007669"/>
    <property type="project" value="TreeGrafter"/>
</dbReference>
<dbReference type="GO" id="GO:0019843">
    <property type="term" value="F:rRNA binding"/>
    <property type="evidence" value="ECO:0007669"/>
    <property type="project" value="UniProtKB-UniRule"/>
</dbReference>
<dbReference type="GO" id="GO:0003735">
    <property type="term" value="F:structural constituent of ribosome"/>
    <property type="evidence" value="ECO:0007669"/>
    <property type="project" value="InterPro"/>
</dbReference>
<dbReference type="GO" id="GO:0002181">
    <property type="term" value="P:cytoplasmic translation"/>
    <property type="evidence" value="ECO:0007669"/>
    <property type="project" value="TreeGrafter"/>
</dbReference>
<dbReference type="FunFam" id="3.90.930.12:FF:000001">
    <property type="entry name" value="50S ribosomal protein L6"/>
    <property type="match status" value="1"/>
</dbReference>
<dbReference type="Gene3D" id="3.90.930.12">
    <property type="entry name" value="Ribosomal protein L6, alpha-beta domain"/>
    <property type="match status" value="2"/>
</dbReference>
<dbReference type="HAMAP" id="MF_01365_B">
    <property type="entry name" value="Ribosomal_uL6_B"/>
    <property type="match status" value="1"/>
</dbReference>
<dbReference type="InterPro" id="IPR000702">
    <property type="entry name" value="Ribosomal_uL6-like"/>
</dbReference>
<dbReference type="InterPro" id="IPR036789">
    <property type="entry name" value="Ribosomal_uL6-like_a/b-dom_sf"/>
</dbReference>
<dbReference type="InterPro" id="IPR020040">
    <property type="entry name" value="Ribosomal_uL6_a/b-dom"/>
</dbReference>
<dbReference type="InterPro" id="IPR019906">
    <property type="entry name" value="Ribosomal_uL6_bac-type"/>
</dbReference>
<dbReference type="InterPro" id="IPR002358">
    <property type="entry name" value="Ribosomal_uL6_CS"/>
</dbReference>
<dbReference type="NCBIfam" id="TIGR03654">
    <property type="entry name" value="L6_bact"/>
    <property type="match status" value="1"/>
</dbReference>
<dbReference type="PANTHER" id="PTHR11655">
    <property type="entry name" value="60S/50S RIBOSOMAL PROTEIN L6/L9"/>
    <property type="match status" value="1"/>
</dbReference>
<dbReference type="PANTHER" id="PTHR11655:SF14">
    <property type="entry name" value="LARGE RIBOSOMAL SUBUNIT PROTEIN UL6M"/>
    <property type="match status" value="1"/>
</dbReference>
<dbReference type="Pfam" id="PF00347">
    <property type="entry name" value="Ribosomal_L6"/>
    <property type="match status" value="2"/>
</dbReference>
<dbReference type="PIRSF" id="PIRSF002162">
    <property type="entry name" value="Ribosomal_L6"/>
    <property type="match status" value="1"/>
</dbReference>
<dbReference type="PRINTS" id="PR00059">
    <property type="entry name" value="RIBOSOMALL6"/>
</dbReference>
<dbReference type="SUPFAM" id="SSF56053">
    <property type="entry name" value="Ribosomal protein L6"/>
    <property type="match status" value="2"/>
</dbReference>
<dbReference type="PROSITE" id="PS00525">
    <property type="entry name" value="RIBOSOMAL_L6_1"/>
    <property type="match status" value="1"/>
</dbReference>
<accession>C3MAZ5</accession>
<reference key="1">
    <citation type="journal article" date="2009" name="Appl. Environ. Microbiol.">
        <title>Rhizobium sp. strain NGR234 possesses a remarkable number of secretion systems.</title>
        <authorList>
            <person name="Schmeisser C."/>
            <person name="Liesegang H."/>
            <person name="Krysciak D."/>
            <person name="Bakkou N."/>
            <person name="Le Quere A."/>
            <person name="Wollherr A."/>
            <person name="Heinemeyer I."/>
            <person name="Morgenstern B."/>
            <person name="Pommerening-Roeser A."/>
            <person name="Flores M."/>
            <person name="Palacios R."/>
            <person name="Brenner S."/>
            <person name="Gottschalk G."/>
            <person name="Schmitz R.A."/>
            <person name="Broughton W.J."/>
            <person name="Perret X."/>
            <person name="Strittmatter A.W."/>
            <person name="Streit W.R."/>
        </authorList>
    </citation>
    <scope>NUCLEOTIDE SEQUENCE [LARGE SCALE GENOMIC DNA]</scope>
    <source>
        <strain>NBRC 101917 / NGR234</strain>
    </source>
</reference>
<sequence length="177" mass="19313">MSRIGKKPVQVPAGVTASVDGQKVTAKGPKGELFFVANDEVSVKLENNAVVVQPLNESKDARAKWGMSRTMVENIFKGVKDGYERKLEINGVGYRASMQGKNLQLALGFSHDVVYQTPEGITIAVPKPTEIVVSGINKQQVGQVAAEIREYRGPEPYKGKGVKYAGERIVRKEGKKK</sequence>
<feature type="chain" id="PRO_1000166825" description="Large ribosomal subunit protein uL6">
    <location>
        <begin position="1"/>
        <end position="177"/>
    </location>
</feature>
<comment type="function">
    <text evidence="1">This protein binds to the 23S rRNA, and is important in its secondary structure. It is located near the subunit interface in the base of the L7/L12 stalk, and near the tRNA binding site of the peptidyltransferase center.</text>
</comment>
<comment type="subunit">
    <text evidence="1">Part of the 50S ribosomal subunit.</text>
</comment>
<comment type="similarity">
    <text evidence="1">Belongs to the universal ribosomal protein uL6 family.</text>
</comment>
<gene>
    <name evidence="1" type="primary">rplF</name>
    <name type="ordered locus">NGR_c12060</name>
</gene>